<name>WDR76_RHIFE</name>
<protein>
    <recommendedName>
        <fullName>WD repeat-containing protein 76</fullName>
    </recommendedName>
</protein>
<evidence type="ECO:0000250" key="1"/>
<evidence type="ECO:0000256" key="2">
    <source>
        <dbReference type="SAM" id="MobiDB-lite"/>
    </source>
</evidence>
<evidence type="ECO:0000305" key="3"/>
<keyword id="KW-1185">Reference proteome</keyword>
<keyword id="KW-0677">Repeat</keyword>
<keyword id="KW-0853">WD repeat</keyword>
<organism>
    <name type="scientific">Rhinolophus ferrumequinum</name>
    <name type="common">Greater horseshoe bat</name>
    <dbReference type="NCBI Taxonomy" id="59479"/>
    <lineage>
        <taxon>Eukaryota</taxon>
        <taxon>Metazoa</taxon>
        <taxon>Chordata</taxon>
        <taxon>Craniata</taxon>
        <taxon>Vertebrata</taxon>
        <taxon>Euteleostomi</taxon>
        <taxon>Mammalia</taxon>
        <taxon>Eutheria</taxon>
        <taxon>Laurasiatheria</taxon>
        <taxon>Chiroptera</taxon>
        <taxon>Yinpterochiroptera</taxon>
        <taxon>Rhinolophoidea</taxon>
        <taxon>Rhinolophidae</taxon>
        <taxon>Rhinolophinae</taxon>
        <taxon>Rhinolophus</taxon>
    </lineage>
</organism>
<accession>B2KIQ4</accession>
<reference key="1">
    <citation type="submission" date="2008-04" db="EMBL/GenBank/DDBJ databases">
        <title>NISC comparative sequencing initiative.</title>
        <authorList>
            <person name="Antonellis A."/>
            <person name="Benjamin B."/>
            <person name="Blakesley R.W."/>
            <person name="Bouffard G.G."/>
            <person name="Brinkley C."/>
            <person name="Brooks S."/>
            <person name="Chu G."/>
            <person name="Chub I."/>
            <person name="Coleman H."/>
            <person name="Fuksenko T."/>
            <person name="Gestole M."/>
            <person name="Gregory M."/>
            <person name="Guan X."/>
            <person name="Gupta J."/>
            <person name="Gurson N."/>
            <person name="Han E."/>
            <person name="Han J."/>
            <person name="Hansen N."/>
            <person name="Hargrove A."/>
            <person name="Hines-Harris K."/>
            <person name="Ho S.-L."/>
            <person name="Hu P."/>
            <person name="Hunter G."/>
            <person name="Hurle B."/>
            <person name="Idol J.R."/>
            <person name="Johnson T."/>
            <person name="Knight E."/>
            <person name="Kwong P."/>
            <person name="Lee-Lin S.-Q."/>
            <person name="Legaspi R."/>
            <person name="Madden M."/>
            <person name="Maduro Q.L."/>
            <person name="Maduro V.B."/>
            <person name="Margulies E.H."/>
            <person name="Masiello C."/>
            <person name="Maskeri B."/>
            <person name="McDowell J."/>
            <person name="Merkulov G."/>
            <person name="Montemayor C."/>
            <person name="Mullikin J.C."/>
            <person name="Park M."/>
            <person name="Prasad A."/>
            <person name="Ramsahoye C."/>
            <person name="Reddix-Dugue N."/>
            <person name="Riebow N."/>
            <person name="Schandler K."/>
            <person name="Schueler M.G."/>
            <person name="Sison C."/>
            <person name="Smith L."/>
            <person name="Stantripop S."/>
            <person name="Thomas J.W."/>
            <person name="Thomas P.J."/>
            <person name="Tsipouri V."/>
            <person name="Young A."/>
            <person name="Green E.D."/>
        </authorList>
    </citation>
    <scope>NUCLEOTIDE SEQUENCE [LARGE SCALE GENOMIC DNA]</scope>
</reference>
<gene>
    <name type="primary">WDR76</name>
</gene>
<feature type="chain" id="PRO_0000351094" description="WD repeat-containing protein 76">
    <location>
        <begin position="1"/>
        <end position="630"/>
    </location>
</feature>
<feature type="repeat" description="WD 1">
    <location>
        <begin position="318"/>
        <end position="359"/>
    </location>
</feature>
<feature type="repeat" description="WD 2">
    <location>
        <begin position="365"/>
        <end position="405"/>
    </location>
</feature>
<feature type="repeat" description="WD 3">
    <location>
        <begin position="408"/>
        <end position="448"/>
    </location>
</feature>
<feature type="repeat" description="WD 4">
    <location>
        <begin position="453"/>
        <end position="492"/>
    </location>
</feature>
<feature type="repeat" description="WD 5">
    <location>
        <begin position="500"/>
        <end position="540"/>
    </location>
</feature>
<feature type="repeat" description="WD 6">
    <location>
        <begin position="542"/>
        <end position="572"/>
    </location>
</feature>
<feature type="repeat" description="WD 7">
    <location>
        <begin position="598"/>
        <end position="630"/>
    </location>
</feature>
<feature type="region of interest" description="Disordered" evidence="2">
    <location>
        <begin position="105"/>
        <end position="165"/>
    </location>
</feature>
<feature type="region of interest" description="Disordered" evidence="2">
    <location>
        <begin position="199"/>
        <end position="219"/>
    </location>
</feature>
<feature type="region of interest" description="Disordered" evidence="2">
    <location>
        <begin position="231"/>
        <end position="252"/>
    </location>
</feature>
<feature type="compositionally biased region" description="Polar residues" evidence="2">
    <location>
        <begin position="105"/>
        <end position="118"/>
    </location>
</feature>
<feature type="compositionally biased region" description="Acidic residues" evidence="2">
    <location>
        <begin position="145"/>
        <end position="155"/>
    </location>
</feature>
<sequence>MSGSCAAAEEKEGSRQRLQMKVNEYKENQNMSSVSLRSIQKTVLEKTVKVCLVPFSLSNYKSGQFKLPKSLLDKNSKNEVACKKYKKTEIKKACTRILTSKMEATASSKAESTLQKSSIDVHTENNQRQHKSTSDTVSLGVDTESSQDGDSDEDTTSSLDDFSGLSPYERKRLKNISENANFFASLQLSESAARLREMIEKRQPPETKRKKPKKKENETGCRRSMRLLNVDPSGVSLPVTPTEPTLVADENPLLPPGPLEMIPENRDDNSELFKEFLQTWAEVSKTSSKNIEKELSSLKTYKANLSGMVISEDTVYKVTKGAIFSIAFHPSEIKTLVAAGAKSGQVGLWDLTHQPKEDGVYVFQPHSQPVSCLYFSPANPAHMLSLSYDGTLRCGDISSAVFEEVYRNERSSLSSFDFLAEDASTFIVGHWDGSISLVDRRTPGASYEKLISSSLRKIRTVHVHPVQRQYFITAGLRDTHIYDARRLTPSGSQPLISLTEHTKSIASAYFSPLTGNRIVTTCADCKLRFFDSSCISSQIPLLTTIRHNTITGRWLTRLRAVWDPKQEDCVIIGSMAHPRQVEIFHETGEQVHSFLGGECLVSVCSINAVHPTRYILAGGNSSGKIHVFMN</sequence>
<proteinExistence type="inferred from homology"/>
<dbReference type="EMBL" id="DP000730">
    <property type="protein sequence ID" value="ACC69118.1"/>
    <property type="status" value="ALT_SEQ"/>
    <property type="molecule type" value="Genomic_DNA"/>
</dbReference>
<dbReference type="SMR" id="B2KIQ4"/>
<dbReference type="FunCoup" id="B2KIQ4">
    <property type="interactions" value="1511"/>
</dbReference>
<dbReference type="InParanoid" id="B2KIQ4"/>
<dbReference type="Proteomes" id="UP000472240">
    <property type="component" value="Unplaced"/>
</dbReference>
<dbReference type="GO" id="GO:0000792">
    <property type="term" value="C:heterochromatin"/>
    <property type="evidence" value="ECO:0000250"/>
    <property type="project" value="UniProtKB"/>
</dbReference>
<dbReference type="GO" id="GO:0005634">
    <property type="term" value="C:nucleus"/>
    <property type="evidence" value="ECO:0000250"/>
    <property type="project" value="UniProtKB"/>
</dbReference>
<dbReference type="GO" id="GO:0090734">
    <property type="term" value="C:site of DNA damage"/>
    <property type="evidence" value="ECO:0000250"/>
    <property type="project" value="UniProtKB"/>
</dbReference>
<dbReference type="GO" id="GO:0003677">
    <property type="term" value="F:DNA binding"/>
    <property type="evidence" value="ECO:0007669"/>
    <property type="project" value="TreeGrafter"/>
</dbReference>
<dbReference type="GO" id="GO:0006974">
    <property type="term" value="P:DNA damage response"/>
    <property type="evidence" value="ECO:0000250"/>
    <property type="project" value="UniProtKB"/>
</dbReference>
<dbReference type="GO" id="GO:2000001">
    <property type="term" value="P:regulation of DNA damage checkpoint"/>
    <property type="evidence" value="ECO:0007669"/>
    <property type="project" value="TreeGrafter"/>
</dbReference>
<dbReference type="FunFam" id="2.130.10.10:FF:000180">
    <property type="entry name" value="WD repeat-containing protein 76"/>
    <property type="match status" value="1"/>
</dbReference>
<dbReference type="Gene3D" id="2.130.10.10">
    <property type="entry name" value="YVTN repeat-like/Quinoprotein amine dehydrogenase"/>
    <property type="match status" value="1"/>
</dbReference>
<dbReference type="InterPro" id="IPR015943">
    <property type="entry name" value="WD40/YVTN_repeat-like_dom_sf"/>
</dbReference>
<dbReference type="InterPro" id="IPR036322">
    <property type="entry name" value="WD40_repeat_dom_sf"/>
</dbReference>
<dbReference type="InterPro" id="IPR001680">
    <property type="entry name" value="WD40_rpt"/>
</dbReference>
<dbReference type="InterPro" id="IPR050853">
    <property type="entry name" value="WD_repeat_DNA-damage-binding"/>
</dbReference>
<dbReference type="PANTHER" id="PTHR14773">
    <property type="entry name" value="WD REPEAT-CONTAINING PROTEIN 76"/>
    <property type="match status" value="1"/>
</dbReference>
<dbReference type="PANTHER" id="PTHR14773:SF0">
    <property type="entry name" value="WD REPEAT-CONTAINING PROTEIN 76"/>
    <property type="match status" value="1"/>
</dbReference>
<dbReference type="Pfam" id="PF00400">
    <property type="entry name" value="WD40"/>
    <property type="match status" value="1"/>
</dbReference>
<dbReference type="SMART" id="SM00320">
    <property type="entry name" value="WD40"/>
    <property type="match status" value="5"/>
</dbReference>
<dbReference type="SUPFAM" id="SSF50978">
    <property type="entry name" value="WD40 repeat-like"/>
    <property type="match status" value="1"/>
</dbReference>
<dbReference type="PROSITE" id="PS50294">
    <property type="entry name" value="WD_REPEATS_REGION"/>
    <property type="match status" value="1"/>
</dbReference>
<comment type="function">
    <text evidence="1">Specifically binds 5-hydroxymethylcytosine (5hmC), suggesting that it acts as a specific reader of 5hmC.</text>
</comment>
<comment type="subunit">
    <text evidence="1">Interacts with CUL4A and/or CUL4B.</text>
</comment>
<comment type="similarity">
    <text evidence="3">Belongs to the WD repeat DDB2/WDR76 family.</text>
</comment>
<comment type="sequence caution" evidence="3">
    <conflict type="erroneous gene model prediction">
        <sequence resource="EMBL-CDS" id="ACC69118"/>
    </conflict>
</comment>